<accession>Q5F9P9</accession>
<gene>
    <name evidence="1" type="primary">lepA</name>
    <name type="ordered locus">NGO_0344</name>
</gene>
<organism>
    <name type="scientific">Neisseria gonorrhoeae (strain ATCC 700825 / FA 1090)</name>
    <dbReference type="NCBI Taxonomy" id="242231"/>
    <lineage>
        <taxon>Bacteria</taxon>
        <taxon>Pseudomonadati</taxon>
        <taxon>Pseudomonadota</taxon>
        <taxon>Betaproteobacteria</taxon>
        <taxon>Neisseriales</taxon>
        <taxon>Neisseriaceae</taxon>
        <taxon>Neisseria</taxon>
    </lineage>
</organism>
<evidence type="ECO:0000255" key="1">
    <source>
        <dbReference type="HAMAP-Rule" id="MF_00071"/>
    </source>
</evidence>
<reference key="1">
    <citation type="submission" date="2003-03" db="EMBL/GenBank/DDBJ databases">
        <title>The complete genome sequence of Neisseria gonorrhoeae.</title>
        <authorList>
            <person name="Lewis L.A."/>
            <person name="Gillaspy A.F."/>
            <person name="McLaughlin R.E."/>
            <person name="Gipson M."/>
            <person name="Ducey T.F."/>
            <person name="Ownbey T."/>
            <person name="Hartman K."/>
            <person name="Nydick C."/>
            <person name="Carson M.B."/>
            <person name="Vaughn J."/>
            <person name="Thomson C."/>
            <person name="Song L."/>
            <person name="Lin S."/>
            <person name="Yuan X."/>
            <person name="Najar F."/>
            <person name="Zhan M."/>
            <person name="Ren Q."/>
            <person name="Zhu H."/>
            <person name="Qi S."/>
            <person name="Kenton S.M."/>
            <person name="Lai H."/>
            <person name="White J.D."/>
            <person name="Clifton S."/>
            <person name="Roe B.A."/>
            <person name="Dyer D.W."/>
        </authorList>
    </citation>
    <scope>NUCLEOTIDE SEQUENCE [LARGE SCALE GENOMIC DNA]</scope>
    <source>
        <strain>ATCC 700825 / FA 1090</strain>
    </source>
</reference>
<protein>
    <recommendedName>
        <fullName evidence="1">Elongation factor 4</fullName>
        <shortName evidence="1">EF-4</shortName>
        <ecNumber evidence="1">3.6.5.n1</ecNumber>
    </recommendedName>
    <alternativeName>
        <fullName evidence="1">Ribosomal back-translocase LepA</fullName>
    </alternativeName>
</protein>
<comment type="function">
    <text evidence="1">Required for accurate and efficient protein synthesis under certain stress conditions. May act as a fidelity factor of the translation reaction, by catalyzing a one-codon backward translocation of tRNAs on improperly translocated ribosomes. Back-translocation proceeds from a post-translocation (POST) complex to a pre-translocation (PRE) complex, thus giving elongation factor G a second chance to translocate the tRNAs correctly. Binds to ribosomes in a GTP-dependent manner.</text>
</comment>
<comment type="catalytic activity">
    <reaction evidence="1">
        <text>GTP + H2O = GDP + phosphate + H(+)</text>
        <dbReference type="Rhea" id="RHEA:19669"/>
        <dbReference type="ChEBI" id="CHEBI:15377"/>
        <dbReference type="ChEBI" id="CHEBI:15378"/>
        <dbReference type="ChEBI" id="CHEBI:37565"/>
        <dbReference type="ChEBI" id="CHEBI:43474"/>
        <dbReference type="ChEBI" id="CHEBI:58189"/>
        <dbReference type="EC" id="3.6.5.n1"/>
    </reaction>
</comment>
<comment type="subcellular location">
    <subcellularLocation>
        <location evidence="1">Cell inner membrane</location>
        <topology evidence="1">Peripheral membrane protein</topology>
        <orientation evidence="1">Cytoplasmic side</orientation>
    </subcellularLocation>
</comment>
<comment type="similarity">
    <text evidence="1">Belongs to the TRAFAC class translation factor GTPase superfamily. Classic translation factor GTPase family. LepA subfamily.</text>
</comment>
<proteinExistence type="inferred from homology"/>
<name>LEPA_NEIG1</name>
<sequence length="597" mass="66002">MKNIRNFSIIAHIDHGKSTLADRFIQYCGGLDLREMSTQVLDSMDIEKERGITIKAQTAALNYKARDGQVYQLNLIDTPGHVDFSYEVSRSLSACEGALLVVDASQGVEAQTVANCYTAIDLGVEVVPVLNKIDLPAADPERVEQEIEDIIGIDAVGAVQCSAKSGIGVEDVLEEIVAKIPAPTGDENAPLQAVIVDSWFDNYVGVVMLIRVKNGTIKLKDKVRFMSTKAETQVEQLGVFTPKSVQKQELKAGEVGFLITGVKELGQAKVGDTVTLVANPATEPLPGFQEVQSQVFAGLYPVESHDYEALRDALEKLQLNDASLKFEPEVSQALGFGFRCGFLGLLHLEIVQERLEREFDMDLITTAPTVVYEVVLKSGEKIEVENPSKLPDIGSIETILEPIITATILVPQEYVGNVMTLCNQKRGVQVNMQYMGRQVMLTYDLPMNEVVMDFFDKLKSTSRGYASLDYHFKEFQPSDLIKLDIMVNGEKVDALSLIVHRQSAVHKGRELASKMRELIPRQMFDIAVQAAIGSRIIARENVKALRKNVLAKCYGGDITRKKKLLEKQKAGKRRMKQVGNVEIPQSAFLAILQVSDK</sequence>
<keyword id="KW-0997">Cell inner membrane</keyword>
<keyword id="KW-1003">Cell membrane</keyword>
<keyword id="KW-0342">GTP-binding</keyword>
<keyword id="KW-0378">Hydrolase</keyword>
<keyword id="KW-0472">Membrane</keyword>
<keyword id="KW-0547">Nucleotide-binding</keyword>
<keyword id="KW-0648">Protein biosynthesis</keyword>
<keyword id="KW-1185">Reference proteome</keyword>
<feature type="chain" id="PRO_0000224777" description="Elongation factor 4">
    <location>
        <begin position="1"/>
        <end position="597"/>
    </location>
</feature>
<feature type="domain" description="tr-type G">
    <location>
        <begin position="2"/>
        <end position="184"/>
    </location>
</feature>
<feature type="binding site" evidence="1">
    <location>
        <begin position="14"/>
        <end position="19"/>
    </location>
    <ligand>
        <name>GTP</name>
        <dbReference type="ChEBI" id="CHEBI:37565"/>
    </ligand>
</feature>
<feature type="binding site" evidence="1">
    <location>
        <begin position="131"/>
        <end position="134"/>
    </location>
    <ligand>
        <name>GTP</name>
        <dbReference type="ChEBI" id="CHEBI:37565"/>
    </ligand>
</feature>
<dbReference type="EC" id="3.6.5.n1" evidence="1"/>
<dbReference type="EMBL" id="AE004969">
    <property type="protein sequence ID" value="AAW89088.1"/>
    <property type="molecule type" value="Genomic_DNA"/>
</dbReference>
<dbReference type="RefSeq" id="WP_003687751.1">
    <property type="nucleotide sequence ID" value="NC_002946.2"/>
</dbReference>
<dbReference type="RefSeq" id="YP_207500.1">
    <property type="nucleotide sequence ID" value="NC_002946.2"/>
</dbReference>
<dbReference type="SMR" id="Q5F9P9"/>
<dbReference type="STRING" id="242231.NGO_0344"/>
<dbReference type="GeneID" id="66752684"/>
<dbReference type="KEGG" id="ngo:NGO_0344"/>
<dbReference type="PATRIC" id="fig|242231.10.peg.420"/>
<dbReference type="HOGENOM" id="CLU_009995_3_3_4"/>
<dbReference type="Proteomes" id="UP000000535">
    <property type="component" value="Chromosome"/>
</dbReference>
<dbReference type="GO" id="GO:0005886">
    <property type="term" value="C:plasma membrane"/>
    <property type="evidence" value="ECO:0007669"/>
    <property type="project" value="UniProtKB-SubCell"/>
</dbReference>
<dbReference type="GO" id="GO:0005525">
    <property type="term" value="F:GTP binding"/>
    <property type="evidence" value="ECO:0007669"/>
    <property type="project" value="UniProtKB-UniRule"/>
</dbReference>
<dbReference type="GO" id="GO:0003924">
    <property type="term" value="F:GTPase activity"/>
    <property type="evidence" value="ECO:0007669"/>
    <property type="project" value="UniProtKB-UniRule"/>
</dbReference>
<dbReference type="GO" id="GO:0097216">
    <property type="term" value="F:guanosine tetraphosphate binding"/>
    <property type="evidence" value="ECO:0007669"/>
    <property type="project" value="UniProtKB-ARBA"/>
</dbReference>
<dbReference type="GO" id="GO:0043022">
    <property type="term" value="F:ribosome binding"/>
    <property type="evidence" value="ECO:0007669"/>
    <property type="project" value="UniProtKB-UniRule"/>
</dbReference>
<dbReference type="GO" id="GO:0003746">
    <property type="term" value="F:translation elongation factor activity"/>
    <property type="evidence" value="ECO:0007669"/>
    <property type="project" value="UniProtKB-UniRule"/>
</dbReference>
<dbReference type="GO" id="GO:0045727">
    <property type="term" value="P:positive regulation of translation"/>
    <property type="evidence" value="ECO:0007669"/>
    <property type="project" value="UniProtKB-UniRule"/>
</dbReference>
<dbReference type="CDD" id="cd03699">
    <property type="entry name" value="EF4_II"/>
    <property type="match status" value="1"/>
</dbReference>
<dbReference type="CDD" id="cd16260">
    <property type="entry name" value="EF4_III"/>
    <property type="match status" value="1"/>
</dbReference>
<dbReference type="CDD" id="cd01890">
    <property type="entry name" value="LepA"/>
    <property type="match status" value="1"/>
</dbReference>
<dbReference type="CDD" id="cd03709">
    <property type="entry name" value="lepA_C"/>
    <property type="match status" value="1"/>
</dbReference>
<dbReference type="FunFam" id="3.40.50.300:FF:000078">
    <property type="entry name" value="Elongation factor 4"/>
    <property type="match status" value="1"/>
</dbReference>
<dbReference type="FunFam" id="2.40.30.10:FF:000015">
    <property type="entry name" value="Translation factor GUF1, mitochondrial"/>
    <property type="match status" value="1"/>
</dbReference>
<dbReference type="FunFam" id="3.30.70.240:FF:000007">
    <property type="entry name" value="Translation factor GUF1, mitochondrial"/>
    <property type="match status" value="1"/>
</dbReference>
<dbReference type="FunFam" id="3.30.70.2570:FF:000001">
    <property type="entry name" value="Translation factor GUF1, mitochondrial"/>
    <property type="match status" value="1"/>
</dbReference>
<dbReference type="FunFam" id="3.30.70.870:FF:000004">
    <property type="entry name" value="Translation factor GUF1, mitochondrial"/>
    <property type="match status" value="1"/>
</dbReference>
<dbReference type="Gene3D" id="3.30.70.240">
    <property type="match status" value="1"/>
</dbReference>
<dbReference type="Gene3D" id="3.30.70.2570">
    <property type="entry name" value="Elongation factor 4, C-terminal domain"/>
    <property type="match status" value="1"/>
</dbReference>
<dbReference type="Gene3D" id="3.30.70.870">
    <property type="entry name" value="Elongation Factor G (Translational Gtpase), domain 3"/>
    <property type="match status" value="1"/>
</dbReference>
<dbReference type="Gene3D" id="3.40.50.300">
    <property type="entry name" value="P-loop containing nucleotide triphosphate hydrolases"/>
    <property type="match status" value="1"/>
</dbReference>
<dbReference type="Gene3D" id="2.40.30.10">
    <property type="entry name" value="Translation factors"/>
    <property type="match status" value="1"/>
</dbReference>
<dbReference type="HAMAP" id="MF_00071">
    <property type="entry name" value="LepA"/>
    <property type="match status" value="1"/>
</dbReference>
<dbReference type="InterPro" id="IPR006297">
    <property type="entry name" value="EF-4"/>
</dbReference>
<dbReference type="InterPro" id="IPR035647">
    <property type="entry name" value="EFG_III/V"/>
</dbReference>
<dbReference type="InterPro" id="IPR000640">
    <property type="entry name" value="EFG_V-like"/>
</dbReference>
<dbReference type="InterPro" id="IPR004161">
    <property type="entry name" value="EFTu-like_2"/>
</dbReference>
<dbReference type="InterPro" id="IPR031157">
    <property type="entry name" value="G_TR_CS"/>
</dbReference>
<dbReference type="InterPro" id="IPR038363">
    <property type="entry name" value="LepA_C_sf"/>
</dbReference>
<dbReference type="InterPro" id="IPR013842">
    <property type="entry name" value="LepA_CTD"/>
</dbReference>
<dbReference type="InterPro" id="IPR035654">
    <property type="entry name" value="LepA_IV"/>
</dbReference>
<dbReference type="InterPro" id="IPR027417">
    <property type="entry name" value="P-loop_NTPase"/>
</dbReference>
<dbReference type="InterPro" id="IPR005225">
    <property type="entry name" value="Small_GTP-bd"/>
</dbReference>
<dbReference type="InterPro" id="IPR000795">
    <property type="entry name" value="T_Tr_GTP-bd_dom"/>
</dbReference>
<dbReference type="InterPro" id="IPR009000">
    <property type="entry name" value="Transl_B-barrel_sf"/>
</dbReference>
<dbReference type="NCBIfam" id="TIGR01393">
    <property type="entry name" value="lepA"/>
    <property type="match status" value="1"/>
</dbReference>
<dbReference type="NCBIfam" id="TIGR00231">
    <property type="entry name" value="small_GTP"/>
    <property type="match status" value="1"/>
</dbReference>
<dbReference type="PANTHER" id="PTHR43512:SF4">
    <property type="entry name" value="TRANSLATION FACTOR GUF1 HOMOLOG, CHLOROPLASTIC"/>
    <property type="match status" value="1"/>
</dbReference>
<dbReference type="PANTHER" id="PTHR43512">
    <property type="entry name" value="TRANSLATION FACTOR GUF1-RELATED"/>
    <property type="match status" value="1"/>
</dbReference>
<dbReference type="Pfam" id="PF00679">
    <property type="entry name" value="EFG_C"/>
    <property type="match status" value="1"/>
</dbReference>
<dbReference type="Pfam" id="PF00009">
    <property type="entry name" value="GTP_EFTU"/>
    <property type="match status" value="1"/>
</dbReference>
<dbReference type="Pfam" id="PF03144">
    <property type="entry name" value="GTP_EFTU_D2"/>
    <property type="match status" value="1"/>
</dbReference>
<dbReference type="Pfam" id="PF06421">
    <property type="entry name" value="LepA_C"/>
    <property type="match status" value="1"/>
</dbReference>
<dbReference type="PRINTS" id="PR00315">
    <property type="entry name" value="ELONGATNFCT"/>
</dbReference>
<dbReference type="SMART" id="SM00838">
    <property type="entry name" value="EFG_C"/>
    <property type="match status" value="1"/>
</dbReference>
<dbReference type="SUPFAM" id="SSF54980">
    <property type="entry name" value="EF-G C-terminal domain-like"/>
    <property type="match status" value="2"/>
</dbReference>
<dbReference type="SUPFAM" id="SSF52540">
    <property type="entry name" value="P-loop containing nucleoside triphosphate hydrolases"/>
    <property type="match status" value="1"/>
</dbReference>
<dbReference type="SUPFAM" id="SSF50447">
    <property type="entry name" value="Translation proteins"/>
    <property type="match status" value="1"/>
</dbReference>
<dbReference type="PROSITE" id="PS00301">
    <property type="entry name" value="G_TR_1"/>
    <property type="match status" value="1"/>
</dbReference>
<dbReference type="PROSITE" id="PS51722">
    <property type="entry name" value="G_TR_2"/>
    <property type="match status" value="1"/>
</dbReference>